<protein>
    <recommendedName>
        <fullName evidence="1">Ribonuclease 3</fullName>
        <ecNumber evidence="1">3.1.26.3</ecNumber>
    </recommendedName>
    <alternativeName>
        <fullName evidence="1">Ribonuclease III</fullName>
        <shortName evidence="1">RNase III</shortName>
    </alternativeName>
</protein>
<sequence>MLDLTELEKSLGVKFENLSLLEQALIHTSWVNENPNHLSGSNERMEFLGDAVLGVIFADRLYHDFPDIQEGDLTRFRSLLVRRESLVRVALGINLGKYLYLGRGEDASKGRFKPANLAGAFEAVLAAIYLDKGIDATREVIFRLFKTEMERVQTLSSNIDYKSRLQELVQAQFQLTPRYRIIDFSGPEHNHLFIAEVYTEDKVLAEGSGRSKKEAETSAAKEALQQFENSFTAEDNI</sequence>
<comment type="function">
    <text evidence="1">Digests double-stranded RNA. Involved in the processing of primary rRNA transcript to yield the immediate precursors to the large and small rRNAs (23S and 16S). Processes some mRNAs, and tRNAs when they are encoded in the rRNA operon. Processes pre-crRNA and tracrRNA of type II CRISPR loci if present in the organism.</text>
</comment>
<comment type="catalytic activity">
    <reaction evidence="1">
        <text>Endonucleolytic cleavage to 5'-phosphomonoester.</text>
        <dbReference type="EC" id="3.1.26.3"/>
    </reaction>
</comment>
<comment type="cofactor">
    <cofactor evidence="1">
        <name>Mg(2+)</name>
        <dbReference type="ChEBI" id="CHEBI:18420"/>
    </cofactor>
</comment>
<comment type="subunit">
    <text evidence="1">Homodimer.</text>
</comment>
<comment type="subcellular location">
    <subcellularLocation>
        <location evidence="1">Cytoplasm</location>
    </subcellularLocation>
</comment>
<comment type="similarity">
    <text evidence="1">Belongs to the ribonuclease III family.</text>
</comment>
<gene>
    <name evidence="1" type="primary">rnc</name>
    <name type="ordered locus">DET1025</name>
</gene>
<organism>
    <name type="scientific">Dehalococcoides mccartyi (strain ATCC BAA-2266 / KCTC 15142 / 195)</name>
    <name type="common">Dehalococcoides ethenogenes (strain 195)</name>
    <dbReference type="NCBI Taxonomy" id="243164"/>
    <lineage>
        <taxon>Bacteria</taxon>
        <taxon>Bacillati</taxon>
        <taxon>Chloroflexota</taxon>
        <taxon>Dehalococcoidia</taxon>
        <taxon>Dehalococcoidales</taxon>
        <taxon>Dehalococcoidaceae</taxon>
        <taxon>Dehalococcoides</taxon>
    </lineage>
</organism>
<reference key="1">
    <citation type="journal article" date="2005" name="Science">
        <title>Genome sequence of the PCE-dechlorinating bacterium Dehalococcoides ethenogenes.</title>
        <authorList>
            <person name="Seshadri R."/>
            <person name="Adrian L."/>
            <person name="Fouts D.E."/>
            <person name="Eisen J.A."/>
            <person name="Phillippy A.M."/>
            <person name="Methe B.A."/>
            <person name="Ward N.L."/>
            <person name="Nelson W.C."/>
            <person name="DeBoy R.T."/>
            <person name="Khouri H.M."/>
            <person name="Kolonay J.F."/>
            <person name="Dodson R.J."/>
            <person name="Daugherty S.C."/>
            <person name="Brinkac L.M."/>
            <person name="Sullivan S.A."/>
            <person name="Madupu R."/>
            <person name="Nelson K.E."/>
            <person name="Kang K.H."/>
            <person name="Impraim M."/>
            <person name="Tran K."/>
            <person name="Robinson J.M."/>
            <person name="Forberger H.A."/>
            <person name="Fraser C.M."/>
            <person name="Zinder S.H."/>
            <person name="Heidelberg J.F."/>
        </authorList>
    </citation>
    <scope>NUCLEOTIDE SEQUENCE [LARGE SCALE GENOMIC DNA]</scope>
    <source>
        <strain>ATCC BAA-2266 / KCTC 15142 / 195</strain>
    </source>
</reference>
<accession>Q3Z7Q8</accession>
<dbReference type="EC" id="3.1.26.3" evidence="1"/>
<dbReference type="EMBL" id="CP000027">
    <property type="protein sequence ID" value="AAW39734.1"/>
    <property type="molecule type" value="Genomic_DNA"/>
</dbReference>
<dbReference type="RefSeq" id="WP_010936720.1">
    <property type="nucleotide sequence ID" value="NC_002936.3"/>
</dbReference>
<dbReference type="SMR" id="Q3Z7Q8"/>
<dbReference type="FunCoup" id="Q3Z7Q8">
    <property type="interactions" value="295"/>
</dbReference>
<dbReference type="STRING" id="243164.DET1025"/>
<dbReference type="GeneID" id="3229696"/>
<dbReference type="KEGG" id="det:DET1025"/>
<dbReference type="eggNOG" id="COG0571">
    <property type="taxonomic scope" value="Bacteria"/>
</dbReference>
<dbReference type="HOGENOM" id="CLU_000907_1_3_0"/>
<dbReference type="InParanoid" id="Q3Z7Q8"/>
<dbReference type="Proteomes" id="UP000008289">
    <property type="component" value="Chromosome"/>
</dbReference>
<dbReference type="GO" id="GO:0005737">
    <property type="term" value="C:cytoplasm"/>
    <property type="evidence" value="ECO:0007669"/>
    <property type="project" value="UniProtKB-SubCell"/>
</dbReference>
<dbReference type="GO" id="GO:0003725">
    <property type="term" value="F:double-stranded RNA binding"/>
    <property type="evidence" value="ECO:0007669"/>
    <property type="project" value="TreeGrafter"/>
</dbReference>
<dbReference type="GO" id="GO:0046872">
    <property type="term" value="F:metal ion binding"/>
    <property type="evidence" value="ECO:0007669"/>
    <property type="project" value="UniProtKB-KW"/>
</dbReference>
<dbReference type="GO" id="GO:0004525">
    <property type="term" value="F:ribonuclease III activity"/>
    <property type="evidence" value="ECO:0007669"/>
    <property type="project" value="UniProtKB-UniRule"/>
</dbReference>
<dbReference type="GO" id="GO:0019843">
    <property type="term" value="F:rRNA binding"/>
    <property type="evidence" value="ECO:0007669"/>
    <property type="project" value="UniProtKB-KW"/>
</dbReference>
<dbReference type="GO" id="GO:0006397">
    <property type="term" value="P:mRNA processing"/>
    <property type="evidence" value="ECO:0007669"/>
    <property type="project" value="UniProtKB-UniRule"/>
</dbReference>
<dbReference type="GO" id="GO:0010468">
    <property type="term" value="P:regulation of gene expression"/>
    <property type="evidence" value="ECO:0007669"/>
    <property type="project" value="TreeGrafter"/>
</dbReference>
<dbReference type="GO" id="GO:0006364">
    <property type="term" value="P:rRNA processing"/>
    <property type="evidence" value="ECO:0007669"/>
    <property type="project" value="UniProtKB-UniRule"/>
</dbReference>
<dbReference type="GO" id="GO:0008033">
    <property type="term" value="P:tRNA processing"/>
    <property type="evidence" value="ECO:0007669"/>
    <property type="project" value="UniProtKB-KW"/>
</dbReference>
<dbReference type="CDD" id="cd10845">
    <property type="entry name" value="DSRM_RNAse_III_family"/>
    <property type="match status" value="1"/>
</dbReference>
<dbReference type="CDD" id="cd00593">
    <property type="entry name" value="RIBOc"/>
    <property type="match status" value="1"/>
</dbReference>
<dbReference type="FunFam" id="1.10.1520.10:FF:000001">
    <property type="entry name" value="Ribonuclease 3"/>
    <property type="match status" value="1"/>
</dbReference>
<dbReference type="FunFam" id="3.30.160.20:FF:000003">
    <property type="entry name" value="Ribonuclease 3"/>
    <property type="match status" value="1"/>
</dbReference>
<dbReference type="Gene3D" id="3.30.160.20">
    <property type="match status" value="1"/>
</dbReference>
<dbReference type="Gene3D" id="1.10.1520.10">
    <property type="entry name" value="Ribonuclease III domain"/>
    <property type="match status" value="1"/>
</dbReference>
<dbReference type="HAMAP" id="MF_00104">
    <property type="entry name" value="RNase_III"/>
    <property type="match status" value="1"/>
</dbReference>
<dbReference type="InterPro" id="IPR014720">
    <property type="entry name" value="dsRBD_dom"/>
</dbReference>
<dbReference type="InterPro" id="IPR011907">
    <property type="entry name" value="RNase_III"/>
</dbReference>
<dbReference type="InterPro" id="IPR000999">
    <property type="entry name" value="RNase_III_dom"/>
</dbReference>
<dbReference type="InterPro" id="IPR036389">
    <property type="entry name" value="RNase_III_sf"/>
</dbReference>
<dbReference type="NCBIfam" id="TIGR02191">
    <property type="entry name" value="RNaseIII"/>
    <property type="match status" value="1"/>
</dbReference>
<dbReference type="PANTHER" id="PTHR11207:SF0">
    <property type="entry name" value="RIBONUCLEASE 3"/>
    <property type="match status" value="1"/>
</dbReference>
<dbReference type="PANTHER" id="PTHR11207">
    <property type="entry name" value="RIBONUCLEASE III"/>
    <property type="match status" value="1"/>
</dbReference>
<dbReference type="Pfam" id="PF00035">
    <property type="entry name" value="dsrm"/>
    <property type="match status" value="1"/>
</dbReference>
<dbReference type="Pfam" id="PF14622">
    <property type="entry name" value="Ribonucleas_3_3"/>
    <property type="match status" value="1"/>
</dbReference>
<dbReference type="SMART" id="SM00358">
    <property type="entry name" value="DSRM"/>
    <property type="match status" value="1"/>
</dbReference>
<dbReference type="SMART" id="SM00535">
    <property type="entry name" value="RIBOc"/>
    <property type="match status" value="1"/>
</dbReference>
<dbReference type="SUPFAM" id="SSF54768">
    <property type="entry name" value="dsRNA-binding domain-like"/>
    <property type="match status" value="1"/>
</dbReference>
<dbReference type="SUPFAM" id="SSF69065">
    <property type="entry name" value="RNase III domain-like"/>
    <property type="match status" value="1"/>
</dbReference>
<dbReference type="PROSITE" id="PS50137">
    <property type="entry name" value="DS_RBD"/>
    <property type="match status" value="1"/>
</dbReference>
<dbReference type="PROSITE" id="PS00517">
    <property type="entry name" value="RNASE_3_1"/>
    <property type="match status" value="1"/>
</dbReference>
<dbReference type="PROSITE" id="PS50142">
    <property type="entry name" value="RNASE_3_2"/>
    <property type="match status" value="1"/>
</dbReference>
<evidence type="ECO:0000255" key="1">
    <source>
        <dbReference type="HAMAP-Rule" id="MF_00104"/>
    </source>
</evidence>
<name>RNC_DEHM1</name>
<keyword id="KW-0963">Cytoplasm</keyword>
<keyword id="KW-0255">Endonuclease</keyword>
<keyword id="KW-0378">Hydrolase</keyword>
<keyword id="KW-0460">Magnesium</keyword>
<keyword id="KW-0479">Metal-binding</keyword>
<keyword id="KW-0507">mRNA processing</keyword>
<keyword id="KW-0540">Nuclease</keyword>
<keyword id="KW-0694">RNA-binding</keyword>
<keyword id="KW-0698">rRNA processing</keyword>
<keyword id="KW-0699">rRNA-binding</keyword>
<keyword id="KW-0819">tRNA processing</keyword>
<feature type="chain" id="PRO_0000228522" description="Ribonuclease 3">
    <location>
        <begin position="1"/>
        <end position="237"/>
    </location>
</feature>
<feature type="domain" description="RNase III" evidence="1">
    <location>
        <begin position="4"/>
        <end position="133"/>
    </location>
</feature>
<feature type="domain" description="DRBM" evidence="1">
    <location>
        <begin position="160"/>
        <end position="229"/>
    </location>
</feature>
<feature type="active site" evidence="1">
    <location>
        <position position="50"/>
    </location>
</feature>
<feature type="active site" evidence="1">
    <location>
        <position position="122"/>
    </location>
</feature>
<feature type="binding site" evidence="1">
    <location>
        <position position="46"/>
    </location>
    <ligand>
        <name>Mg(2+)</name>
        <dbReference type="ChEBI" id="CHEBI:18420"/>
    </ligand>
</feature>
<feature type="binding site" evidence="1">
    <location>
        <position position="122"/>
    </location>
    <ligand>
        <name>Mg(2+)</name>
        <dbReference type="ChEBI" id="CHEBI:18420"/>
    </ligand>
</feature>
<proteinExistence type="inferred from homology"/>